<sequence length="451" mass="51427">MQSIEDIWQETLQIVKKNMSKPSYDTWMKSTTAHSLEGNTFIISAPNNFVRDWLEKSYTQFIANILQEITGRLFDVRFIDGEQEENFEYTVIKPNPALDEDGIEIGKHMLNPRYVFDTFVIGSGNRFAHAASLAVAEAPAKAYNPLFIYGGVGLGKTHLMHAVGHYVQQHKDNAKVMYLSSEKFTNEFISSIRDNKTEEFRTKYRNVDVLLIDDIQFLAGKEGTQEEFFHTFNTLYDEQKQIIISSDRPPKEIPTLEDRLRSRFEWGLITDITPPDLETRIAILRKKAKADGLDIPNEVMLYIANQIDSNIRELEGALIRVVAYSSLVNKDITAGLAAEALKDIIPSSKSQVITISGIQETVGEYFHVRLEDFKAKKRTKSIAFPRQIAMYLSRELTDASLPKIGDEFGGRDHTTVIHAHEKISQLLKTDQVLKNDLAEIEKNLRKSQNMF</sequence>
<proteinExistence type="inferred from homology"/>
<gene>
    <name evidence="1" type="primary">dnaA</name>
    <name type="ordered locus">lin0001</name>
</gene>
<keyword id="KW-0067">ATP-binding</keyword>
<keyword id="KW-0963">Cytoplasm</keyword>
<keyword id="KW-0235">DNA replication</keyword>
<keyword id="KW-0238">DNA-binding</keyword>
<keyword id="KW-0446">Lipid-binding</keyword>
<keyword id="KW-0547">Nucleotide-binding</keyword>
<protein>
    <recommendedName>
        <fullName evidence="1">Chromosomal replication initiator protein DnaA</fullName>
    </recommendedName>
</protein>
<accession>Q92FV2</accession>
<name>DNAA_LISIN</name>
<dbReference type="EMBL" id="AL596163">
    <property type="protein sequence ID" value="CAC95234.1"/>
    <property type="molecule type" value="Genomic_DNA"/>
</dbReference>
<dbReference type="PIR" id="AB1433">
    <property type="entry name" value="AB1433"/>
</dbReference>
<dbReference type="RefSeq" id="WP_003759425.1">
    <property type="nucleotide sequence ID" value="NC_003212.1"/>
</dbReference>
<dbReference type="SMR" id="Q92FV2"/>
<dbReference type="STRING" id="272626.gene:17564312"/>
<dbReference type="GeneID" id="93233494"/>
<dbReference type="KEGG" id="lin:dnaA"/>
<dbReference type="eggNOG" id="COG0593">
    <property type="taxonomic scope" value="Bacteria"/>
</dbReference>
<dbReference type="HOGENOM" id="CLU_026910_3_1_9"/>
<dbReference type="OrthoDB" id="9807019at2"/>
<dbReference type="Proteomes" id="UP000002513">
    <property type="component" value="Chromosome"/>
</dbReference>
<dbReference type="GO" id="GO:0005737">
    <property type="term" value="C:cytoplasm"/>
    <property type="evidence" value="ECO:0007669"/>
    <property type="project" value="UniProtKB-SubCell"/>
</dbReference>
<dbReference type="GO" id="GO:0005886">
    <property type="term" value="C:plasma membrane"/>
    <property type="evidence" value="ECO:0007669"/>
    <property type="project" value="TreeGrafter"/>
</dbReference>
<dbReference type="GO" id="GO:0005524">
    <property type="term" value="F:ATP binding"/>
    <property type="evidence" value="ECO:0007669"/>
    <property type="project" value="UniProtKB-UniRule"/>
</dbReference>
<dbReference type="GO" id="GO:0016887">
    <property type="term" value="F:ATP hydrolysis activity"/>
    <property type="evidence" value="ECO:0007669"/>
    <property type="project" value="InterPro"/>
</dbReference>
<dbReference type="GO" id="GO:0003688">
    <property type="term" value="F:DNA replication origin binding"/>
    <property type="evidence" value="ECO:0007669"/>
    <property type="project" value="UniProtKB-UniRule"/>
</dbReference>
<dbReference type="GO" id="GO:0008289">
    <property type="term" value="F:lipid binding"/>
    <property type="evidence" value="ECO:0007669"/>
    <property type="project" value="UniProtKB-KW"/>
</dbReference>
<dbReference type="GO" id="GO:0006270">
    <property type="term" value="P:DNA replication initiation"/>
    <property type="evidence" value="ECO:0007669"/>
    <property type="project" value="UniProtKB-UniRule"/>
</dbReference>
<dbReference type="GO" id="GO:0006275">
    <property type="term" value="P:regulation of DNA replication"/>
    <property type="evidence" value="ECO:0007669"/>
    <property type="project" value="UniProtKB-UniRule"/>
</dbReference>
<dbReference type="CDD" id="cd00009">
    <property type="entry name" value="AAA"/>
    <property type="match status" value="1"/>
</dbReference>
<dbReference type="CDD" id="cd06571">
    <property type="entry name" value="Bac_DnaA_C"/>
    <property type="match status" value="1"/>
</dbReference>
<dbReference type="FunFam" id="1.10.1750.10:FF:000003">
    <property type="entry name" value="Chromosomal replication initiator protein DnaA"/>
    <property type="match status" value="1"/>
</dbReference>
<dbReference type="FunFam" id="1.10.8.60:FF:000003">
    <property type="entry name" value="Chromosomal replication initiator protein DnaA"/>
    <property type="match status" value="1"/>
</dbReference>
<dbReference type="FunFam" id="3.40.50.300:FF:000150">
    <property type="entry name" value="Chromosomal replication initiator protein DnaA"/>
    <property type="match status" value="1"/>
</dbReference>
<dbReference type="Gene3D" id="1.10.1750.10">
    <property type="match status" value="1"/>
</dbReference>
<dbReference type="Gene3D" id="1.10.8.60">
    <property type="match status" value="1"/>
</dbReference>
<dbReference type="Gene3D" id="3.30.300.180">
    <property type="match status" value="1"/>
</dbReference>
<dbReference type="Gene3D" id="3.40.50.300">
    <property type="entry name" value="P-loop containing nucleotide triphosphate hydrolases"/>
    <property type="match status" value="1"/>
</dbReference>
<dbReference type="HAMAP" id="MF_00377">
    <property type="entry name" value="DnaA_bact"/>
    <property type="match status" value="1"/>
</dbReference>
<dbReference type="InterPro" id="IPR003593">
    <property type="entry name" value="AAA+_ATPase"/>
</dbReference>
<dbReference type="InterPro" id="IPR001957">
    <property type="entry name" value="Chromosome_initiator_DnaA"/>
</dbReference>
<dbReference type="InterPro" id="IPR020591">
    <property type="entry name" value="Chromosome_initiator_DnaA-like"/>
</dbReference>
<dbReference type="InterPro" id="IPR018312">
    <property type="entry name" value="Chromosome_initiator_DnaA_CS"/>
</dbReference>
<dbReference type="InterPro" id="IPR013159">
    <property type="entry name" value="DnaA_C"/>
</dbReference>
<dbReference type="InterPro" id="IPR013317">
    <property type="entry name" value="DnaA_dom"/>
</dbReference>
<dbReference type="InterPro" id="IPR024633">
    <property type="entry name" value="DnaA_N_dom"/>
</dbReference>
<dbReference type="InterPro" id="IPR038454">
    <property type="entry name" value="DnaA_N_sf"/>
</dbReference>
<dbReference type="InterPro" id="IPR027417">
    <property type="entry name" value="P-loop_NTPase"/>
</dbReference>
<dbReference type="InterPro" id="IPR010921">
    <property type="entry name" value="Trp_repressor/repl_initiator"/>
</dbReference>
<dbReference type="NCBIfam" id="TIGR00362">
    <property type="entry name" value="DnaA"/>
    <property type="match status" value="1"/>
</dbReference>
<dbReference type="NCBIfam" id="NF010686">
    <property type="entry name" value="PRK14086.1"/>
    <property type="match status" value="1"/>
</dbReference>
<dbReference type="PANTHER" id="PTHR30050">
    <property type="entry name" value="CHROMOSOMAL REPLICATION INITIATOR PROTEIN DNAA"/>
    <property type="match status" value="1"/>
</dbReference>
<dbReference type="PANTHER" id="PTHR30050:SF2">
    <property type="entry name" value="CHROMOSOMAL REPLICATION INITIATOR PROTEIN DNAA"/>
    <property type="match status" value="1"/>
</dbReference>
<dbReference type="Pfam" id="PF00308">
    <property type="entry name" value="Bac_DnaA"/>
    <property type="match status" value="1"/>
</dbReference>
<dbReference type="Pfam" id="PF08299">
    <property type="entry name" value="Bac_DnaA_C"/>
    <property type="match status" value="1"/>
</dbReference>
<dbReference type="Pfam" id="PF11638">
    <property type="entry name" value="DnaA_N"/>
    <property type="match status" value="1"/>
</dbReference>
<dbReference type="PRINTS" id="PR00051">
    <property type="entry name" value="DNAA"/>
</dbReference>
<dbReference type="SMART" id="SM00382">
    <property type="entry name" value="AAA"/>
    <property type="match status" value="1"/>
</dbReference>
<dbReference type="SMART" id="SM00760">
    <property type="entry name" value="Bac_DnaA_C"/>
    <property type="match status" value="1"/>
</dbReference>
<dbReference type="SUPFAM" id="SSF52540">
    <property type="entry name" value="P-loop containing nucleoside triphosphate hydrolases"/>
    <property type="match status" value="1"/>
</dbReference>
<dbReference type="SUPFAM" id="SSF48295">
    <property type="entry name" value="TrpR-like"/>
    <property type="match status" value="1"/>
</dbReference>
<dbReference type="PROSITE" id="PS01008">
    <property type="entry name" value="DNAA"/>
    <property type="match status" value="1"/>
</dbReference>
<feature type="chain" id="PRO_0000114201" description="Chromosomal replication initiator protein DnaA">
    <location>
        <begin position="1"/>
        <end position="451"/>
    </location>
</feature>
<feature type="region of interest" description="Domain I, interacts with DnaA modulators" evidence="1">
    <location>
        <begin position="1"/>
        <end position="72"/>
    </location>
</feature>
<feature type="region of interest" description="Domain II" evidence="1">
    <location>
        <begin position="72"/>
        <end position="108"/>
    </location>
</feature>
<feature type="region of interest" description="Domain III, AAA+ region" evidence="1">
    <location>
        <begin position="109"/>
        <end position="325"/>
    </location>
</feature>
<feature type="region of interest" description="Domain IV, binds dsDNA" evidence="1">
    <location>
        <begin position="326"/>
        <end position="451"/>
    </location>
</feature>
<feature type="binding site" evidence="1">
    <location>
        <position position="153"/>
    </location>
    <ligand>
        <name>ATP</name>
        <dbReference type="ChEBI" id="CHEBI:30616"/>
    </ligand>
</feature>
<feature type="binding site" evidence="1">
    <location>
        <position position="155"/>
    </location>
    <ligand>
        <name>ATP</name>
        <dbReference type="ChEBI" id="CHEBI:30616"/>
    </ligand>
</feature>
<feature type="binding site" evidence="1">
    <location>
        <position position="156"/>
    </location>
    <ligand>
        <name>ATP</name>
        <dbReference type="ChEBI" id="CHEBI:30616"/>
    </ligand>
</feature>
<feature type="binding site" evidence="1">
    <location>
        <position position="157"/>
    </location>
    <ligand>
        <name>ATP</name>
        <dbReference type="ChEBI" id="CHEBI:30616"/>
    </ligand>
</feature>
<organism>
    <name type="scientific">Listeria innocua serovar 6a (strain ATCC BAA-680 / CLIP 11262)</name>
    <dbReference type="NCBI Taxonomy" id="272626"/>
    <lineage>
        <taxon>Bacteria</taxon>
        <taxon>Bacillati</taxon>
        <taxon>Bacillota</taxon>
        <taxon>Bacilli</taxon>
        <taxon>Bacillales</taxon>
        <taxon>Listeriaceae</taxon>
        <taxon>Listeria</taxon>
    </lineage>
</organism>
<reference key="1">
    <citation type="journal article" date="2001" name="Science">
        <title>Comparative genomics of Listeria species.</title>
        <authorList>
            <person name="Glaser P."/>
            <person name="Frangeul L."/>
            <person name="Buchrieser C."/>
            <person name="Rusniok C."/>
            <person name="Amend A."/>
            <person name="Baquero F."/>
            <person name="Berche P."/>
            <person name="Bloecker H."/>
            <person name="Brandt P."/>
            <person name="Chakraborty T."/>
            <person name="Charbit A."/>
            <person name="Chetouani F."/>
            <person name="Couve E."/>
            <person name="de Daruvar A."/>
            <person name="Dehoux P."/>
            <person name="Domann E."/>
            <person name="Dominguez-Bernal G."/>
            <person name="Duchaud E."/>
            <person name="Durant L."/>
            <person name="Dussurget O."/>
            <person name="Entian K.-D."/>
            <person name="Fsihi H."/>
            <person name="Garcia-del Portillo F."/>
            <person name="Garrido P."/>
            <person name="Gautier L."/>
            <person name="Goebel W."/>
            <person name="Gomez-Lopez N."/>
            <person name="Hain T."/>
            <person name="Hauf J."/>
            <person name="Jackson D."/>
            <person name="Jones L.-M."/>
            <person name="Kaerst U."/>
            <person name="Kreft J."/>
            <person name="Kuhn M."/>
            <person name="Kunst F."/>
            <person name="Kurapkat G."/>
            <person name="Madueno E."/>
            <person name="Maitournam A."/>
            <person name="Mata Vicente J."/>
            <person name="Ng E."/>
            <person name="Nedjari H."/>
            <person name="Nordsiek G."/>
            <person name="Novella S."/>
            <person name="de Pablos B."/>
            <person name="Perez-Diaz J.-C."/>
            <person name="Purcell R."/>
            <person name="Remmel B."/>
            <person name="Rose M."/>
            <person name="Schlueter T."/>
            <person name="Simoes N."/>
            <person name="Tierrez A."/>
            <person name="Vazquez-Boland J.-A."/>
            <person name="Voss H."/>
            <person name="Wehland J."/>
            <person name="Cossart P."/>
        </authorList>
    </citation>
    <scope>NUCLEOTIDE SEQUENCE [LARGE SCALE GENOMIC DNA]</scope>
    <source>
        <strain>ATCC BAA-680 / CLIP 11262</strain>
    </source>
</reference>
<evidence type="ECO:0000255" key="1">
    <source>
        <dbReference type="HAMAP-Rule" id="MF_00377"/>
    </source>
</evidence>
<comment type="function">
    <text evidence="1">Plays an essential role in the initiation and regulation of chromosomal replication. ATP-DnaA binds to the origin of replication (oriC) to initiate formation of the DNA replication initiation complex once per cell cycle. Binds the DnaA box (a 9 base pair repeat at the origin) and separates the double-stranded (ds)DNA. Forms a right-handed helical filament on oriC DNA; dsDNA binds to the exterior of the filament while single-stranded (ss)DNA is stabiized in the filament's interior. The ATP-DnaA-oriC complex binds and stabilizes one strand of the AT-rich DNA unwinding element (DUE), permitting loading of DNA polymerase. After initiation quickly degrades to an ADP-DnaA complex that is not apt for DNA replication. Binds acidic phospholipids.</text>
</comment>
<comment type="subunit">
    <text evidence="1">Oligomerizes as a right-handed, spiral filament on DNA at oriC.</text>
</comment>
<comment type="subcellular location">
    <subcellularLocation>
        <location evidence="1">Cytoplasm</location>
    </subcellularLocation>
</comment>
<comment type="domain">
    <text evidence="1">Domain I is involved in oligomerization and binding regulators, domain II is flexibile and of varying length in different bacteria, domain III forms the AAA+ region, while domain IV binds dsDNA.</text>
</comment>
<comment type="similarity">
    <text evidence="1">Belongs to the DnaA family.</text>
</comment>